<dbReference type="GO" id="GO:0090729">
    <property type="term" value="F:toxin activity"/>
    <property type="evidence" value="ECO:0007669"/>
    <property type="project" value="UniProtKB-KW"/>
</dbReference>
<dbReference type="InterPro" id="IPR027582">
    <property type="entry name" value="Amanitin/phalloidin"/>
</dbReference>
<dbReference type="NCBIfam" id="TIGR04309">
    <property type="entry name" value="amanitin"/>
    <property type="match status" value="1"/>
</dbReference>
<keyword id="KW-0800">Toxin</keyword>
<evidence type="ECO:0000250" key="1">
    <source>
        <dbReference type="UniProtKB" id="A0A067SLB9"/>
    </source>
</evidence>
<evidence type="ECO:0000269" key="2">
    <source>
    </source>
</evidence>
<evidence type="ECO:0000269" key="3">
    <source>
    </source>
</evidence>
<evidence type="ECO:0000303" key="4">
    <source>
    </source>
</evidence>
<evidence type="ECO:0000303" key="5">
    <source>
    </source>
</evidence>
<evidence type="ECO:0000303" key="6">
    <source>
    </source>
</evidence>
<evidence type="ECO:0000305" key="7"/>
<evidence type="ECO:0000305" key="8">
    <source>
    </source>
</evidence>
<name>CYAB_AMAPH</name>
<organism>
    <name type="scientific">Amanita phalloides</name>
    <name type="common">Death cap</name>
    <dbReference type="NCBI Taxonomy" id="67723"/>
    <lineage>
        <taxon>Eukaryota</taxon>
        <taxon>Fungi</taxon>
        <taxon>Dikarya</taxon>
        <taxon>Basidiomycota</taxon>
        <taxon>Agaricomycotina</taxon>
        <taxon>Agaricomycetes</taxon>
        <taxon>Agaricomycetidae</taxon>
        <taxon>Agaricales</taxon>
        <taxon>Pluteineae</taxon>
        <taxon>Amanitaceae</taxon>
        <taxon>Amanita</taxon>
    </lineage>
</organism>
<comment type="function">
    <text evidence="3 8">Cyclic heptapeptide that belongs to the MSDIN-like toxin family responsible for a large number of food poisoning cases and deaths (PubMed:27978833). Cycloaminide B is non-toxic to mammals but shows immunosuppressive activity, probably through the inhibition of the action of interleukin-1 and interleukin-2 (PubMed:27978833, PubMed:8441706).</text>
</comment>
<comment type="PTM">
    <text evidence="1 2">Processed by the macrocyclase-peptidase enzyme POPB to yield a cyclic decapeptide (By similarity). POPB first removes 10 residues from the N-terminus (PubMed:28866879). Conformational trapping of the remaining peptide forces the enzyme to release this intermediate rather than proceed to macrocyclization (By similarity). The enzyme rebinds the remaining peptide in a different conformation and catalyzes macrocyclization of the N-terminal 7 residues (PubMed:28866879).</text>
</comment>
<comment type="similarity">
    <text evidence="7">Belongs to the MSDIN fungal toxin family.</text>
</comment>
<protein>
    <recommendedName>
        <fullName evidence="4">Cycloamanide B proprotein</fullName>
    </recommendedName>
    <component>
        <recommendedName>
            <fullName evidence="4">Cycloamanide B</fullName>
            <shortName evidence="6">CyA B</shortName>
            <shortName evidence="5">Cyl B</shortName>
        </recommendedName>
    </component>
</protein>
<accession>P0CU58</accession>
<sequence>MSDINAARLPSFFFPIPCISDDIEMVLTRGESLC</sequence>
<reference key="1">
    <citation type="journal article" date="2016" name="BMC Genomics">
        <title>Expansion and diversification of the MSDIN family of cyclic peptide genes in the poisonous agarics Amanita phalloides and A. bisporigera.</title>
        <authorList>
            <person name="Pulman J.A."/>
            <person name="Childs K.L."/>
            <person name="Sgambelluri R.M."/>
            <person name="Walton J.D."/>
        </authorList>
    </citation>
    <scope>NUCLEOTIDE SEQUENCE [LARGE SCALE GENOMIC DNA]</scope>
    <scope>FUNCTION</scope>
</reference>
<reference key="2">
    <citation type="journal article" date="1993" name="Peptides">
        <title>Immunosuppressive activity in the series of cycloamanide peptides from mushrooms.</title>
        <authorList>
            <person name="Wieczorek Z."/>
            <person name="Siemion I.Z."/>
            <person name="Zimecki M."/>
            <person name="Bolewska-Pedyczak E."/>
            <person name="Wieland T."/>
        </authorList>
    </citation>
    <scope>FUNCTION</scope>
</reference>
<reference key="3">
    <citation type="journal article" date="2018" name="ACS Synth. Biol.">
        <title>Versatility of prolyl oligopeptidase B in peptide macrocyclization.</title>
        <authorList>
            <person name="Sgambelluri R.M."/>
            <person name="Smith M.O."/>
            <person name="Walton J.D."/>
        </authorList>
    </citation>
    <scope>CYCLIZATION</scope>
</reference>
<feature type="propeptide" id="PRO_0000443778" evidence="8">
    <location>
        <begin position="1"/>
        <end position="10"/>
    </location>
</feature>
<feature type="peptide" id="PRO_0000443779" description="Cycloamanide B" evidence="8">
    <location>
        <begin position="11"/>
        <end position="17"/>
    </location>
</feature>
<feature type="propeptide" id="PRO_0000443780" evidence="8">
    <location>
        <begin position="18"/>
        <end position="34"/>
    </location>
</feature>
<feature type="cross-link" description="Cyclopeptide (Ser-Pro)" evidence="8">
    <location>
        <begin position="11"/>
        <end position="17"/>
    </location>
</feature>
<proteinExistence type="inferred from homology"/>